<keyword id="KW-0004">4Fe-4S</keyword>
<keyword id="KW-0150">Chloroplast</keyword>
<keyword id="KW-0408">Iron</keyword>
<keyword id="KW-0411">Iron-sulfur</keyword>
<keyword id="KW-0472">Membrane</keyword>
<keyword id="KW-0479">Metal-binding</keyword>
<keyword id="KW-0520">NAD</keyword>
<keyword id="KW-0521">NADP</keyword>
<keyword id="KW-0934">Plastid</keyword>
<keyword id="KW-0618">Plastoquinone</keyword>
<keyword id="KW-0874">Quinone</keyword>
<keyword id="KW-0677">Repeat</keyword>
<keyword id="KW-0793">Thylakoid</keyword>
<keyword id="KW-1278">Translocase</keyword>
<feature type="chain" id="PRO_0000298573" description="NAD(P)H-quinone oxidoreductase subunit I, chloroplastic">
    <location>
        <begin position="1"/>
        <end position="175"/>
    </location>
</feature>
<feature type="domain" description="4Fe-4S ferredoxin-type 1" evidence="1">
    <location>
        <begin position="55"/>
        <end position="84"/>
    </location>
</feature>
<feature type="domain" description="4Fe-4S ferredoxin-type 2" evidence="1">
    <location>
        <begin position="95"/>
        <end position="124"/>
    </location>
</feature>
<feature type="binding site" evidence="1">
    <location>
        <position position="64"/>
    </location>
    <ligand>
        <name>[4Fe-4S] cluster</name>
        <dbReference type="ChEBI" id="CHEBI:49883"/>
        <label>1</label>
    </ligand>
</feature>
<feature type="binding site" evidence="1">
    <location>
        <position position="67"/>
    </location>
    <ligand>
        <name>[4Fe-4S] cluster</name>
        <dbReference type="ChEBI" id="CHEBI:49883"/>
        <label>1</label>
    </ligand>
</feature>
<feature type="binding site" evidence="1">
    <location>
        <position position="70"/>
    </location>
    <ligand>
        <name>[4Fe-4S] cluster</name>
        <dbReference type="ChEBI" id="CHEBI:49883"/>
        <label>1</label>
    </ligand>
</feature>
<feature type="binding site" evidence="1">
    <location>
        <position position="74"/>
    </location>
    <ligand>
        <name>[4Fe-4S] cluster</name>
        <dbReference type="ChEBI" id="CHEBI:49883"/>
        <label>2</label>
    </ligand>
</feature>
<feature type="binding site" evidence="1">
    <location>
        <position position="104"/>
    </location>
    <ligand>
        <name>[4Fe-4S] cluster</name>
        <dbReference type="ChEBI" id="CHEBI:49883"/>
        <label>2</label>
    </ligand>
</feature>
<feature type="binding site" evidence="1">
    <location>
        <position position="107"/>
    </location>
    <ligand>
        <name>[4Fe-4S] cluster</name>
        <dbReference type="ChEBI" id="CHEBI:49883"/>
        <label>2</label>
    </ligand>
</feature>
<feature type="binding site" evidence="1">
    <location>
        <position position="110"/>
    </location>
    <ligand>
        <name>[4Fe-4S] cluster</name>
        <dbReference type="ChEBI" id="CHEBI:49883"/>
        <label>2</label>
    </ligand>
</feature>
<feature type="binding site" evidence="1">
    <location>
        <position position="114"/>
    </location>
    <ligand>
        <name>[4Fe-4S] cluster</name>
        <dbReference type="ChEBI" id="CHEBI:49883"/>
        <label>1</label>
    </ligand>
</feature>
<proteinExistence type="inferred from homology"/>
<comment type="function">
    <text evidence="1">NDH shuttles electrons from NAD(P)H:plastoquinone, via FMN and iron-sulfur (Fe-S) centers, to quinones in the photosynthetic chain and possibly in a chloroplast respiratory chain. The immediate electron acceptor for the enzyme in this species is believed to be plastoquinone. Couples the redox reaction to proton translocation, and thus conserves the redox energy in a proton gradient.</text>
</comment>
<comment type="catalytic activity">
    <reaction evidence="1">
        <text>a plastoquinone + NADH + (n+1) H(+)(in) = a plastoquinol + NAD(+) + n H(+)(out)</text>
        <dbReference type="Rhea" id="RHEA:42608"/>
        <dbReference type="Rhea" id="RHEA-COMP:9561"/>
        <dbReference type="Rhea" id="RHEA-COMP:9562"/>
        <dbReference type="ChEBI" id="CHEBI:15378"/>
        <dbReference type="ChEBI" id="CHEBI:17757"/>
        <dbReference type="ChEBI" id="CHEBI:57540"/>
        <dbReference type="ChEBI" id="CHEBI:57945"/>
        <dbReference type="ChEBI" id="CHEBI:62192"/>
    </reaction>
</comment>
<comment type="catalytic activity">
    <reaction evidence="1">
        <text>a plastoquinone + NADPH + (n+1) H(+)(in) = a plastoquinol + NADP(+) + n H(+)(out)</text>
        <dbReference type="Rhea" id="RHEA:42612"/>
        <dbReference type="Rhea" id="RHEA-COMP:9561"/>
        <dbReference type="Rhea" id="RHEA-COMP:9562"/>
        <dbReference type="ChEBI" id="CHEBI:15378"/>
        <dbReference type="ChEBI" id="CHEBI:17757"/>
        <dbReference type="ChEBI" id="CHEBI:57783"/>
        <dbReference type="ChEBI" id="CHEBI:58349"/>
        <dbReference type="ChEBI" id="CHEBI:62192"/>
    </reaction>
</comment>
<comment type="cofactor">
    <cofactor evidence="1">
        <name>[4Fe-4S] cluster</name>
        <dbReference type="ChEBI" id="CHEBI:49883"/>
    </cofactor>
    <text evidence="1">Binds 2 [4Fe-4S] clusters per subunit.</text>
</comment>
<comment type="subunit">
    <text evidence="1">NDH is composed of at least 16 different subunits, 5 of which are encoded in the nucleus.</text>
</comment>
<comment type="subcellular location">
    <subcellularLocation>
        <location evidence="1">Plastid</location>
        <location evidence="1">Chloroplast thylakoid membrane</location>
        <topology evidence="1">Peripheral membrane protein</topology>
    </subcellularLocation>
</comment>
<comment type="similarity">
    <text evidence="1">Belongs to the complex I 23 kDa subunit family.</text>
</comment>
<name>NDHI_CHLAT</name>
<organism>
    <name type="scientific">Chlorokybus atmophyticus</name>
    <name type="common">Soil alga</name>
    <dbReference type="NCBI Taxonomy" id="3144"/>
    <lineage>
        <taxon>Eukaryota</taxon>
        <taxon>Viridiplantae</taxon>
        <taxon>Streptophyta</taxon>
        <taxon>Chlorokybophyceae</taxon>
        <taxon>Chlorokybales</taxon>
        <taxon>Chlorokybaceae</taxon>
        <taxon>Chlorokybus</taxon>
    </lineage>
</organism>
<geneLocation type="chloroplast"/>
<gene>
    <name evidence="1" type="primary">ndhI</name>
</gene>
<sequence length="175" mass="20314">MFNFINNIQNYSKEAVQAAQYIGQGFMVTFDHMSRRPVTIQYPYEKLIPSERFRGRIHFEFDKCIACEVCVRVCPINLPVVNWEFQKEKKKKQLQTYSIDFGVCIFCGNCVEYCPTNCLSMTEEYELSVYDRHELNFDNFALGRLPSMVENDAMVKNMKGLGYLPKGVIESHASS</sequence>
<accession>Q19V57</accession>
<protein>
    <recommendedName>
        <fullName evidence="1">NAD(P)H-quinone oxidoreductase subunit I, chloroplastic</fullName>
        <ecNumber evidence="1">7.1.1.-</ecNumber>
    </recommendedName>
    <alternativeName>
        <fullName evidence="1">NAD(P)H dehydrogenase subunit I</fullName>
        <shortName evidence="1">NDH subunit I</shortName>
    </alternativeName>
    <alternativeName>
        <fullName evidence="1">NADH-plastoquinone oxidoreductase subunit I</fullName>
    </alternativeName>
</protein>
<reference key="1">
    <citation type="journal article" date="2007" name="BMC Biol.">
        <title>A clade uniting the green algae Mesostigma viride and Chlorokybus atmophyticus represents the deepest branch of the Streptophyta in chloroplast genome-based phylogenies.</title>
        <authorList>
            <person name="Lemieux C."/>
            <person name="Otis C."/>
            <person name="Turmel M."/>
        </authorList>
    </citation>
    <scope>NUCLEOTIDE SEQUENCE [LARGE SCALE GENOMIC DNA]</scope>
    <source>
        <strain>SAG 48.80</strain>
    </source>
</reference>
<evidence type="ECO:0000255" key="1">
    <source>
        <dbReference type="HAMAP-Rule" id="MF_01351"/>
    </source>
</evidence>
<dbReference type="EC" id="7.1.1.-" evidence="1"/>
<dbReference type="EMBL" id="DQ422812">
    <property type="protein sequence ID" value="ABD62197.2"/>
    <property type="molecule type" value="Genomic_DNA"/>
</dbReference>
<dbReference type="RefSeq" id="YP_001019163.1">
    <property type="nucleotide sequence ID" value="NC_008822.1"/>
</dbReference>
<dbReference type="SMR" id="Q19V57"/>
<dbReference type="GeneID" id="4783249"/>
<dbReference type="GO" id="GO:0009535">
    <property type="term" value="C:chloroplast thylakoid membrane"/>
    <property type="evidence" value="ECO:0007669"/>
    <property type="project" value="UniProtKB-SubCell"/>
</dbReference>
<dbReference type="GO" id="GO:0051539">
    <property type="term" value="F:4 iron, 4 sulfur cluster binding"/>
    <property type="evidence" value="ECO:0007669"/>
    <property type="project" value="UniProtKB-KW"/>
</dbReference>
<dbReference type="GO" id="GO:0005506">
    <property type="term" value="F:iron ion binding"/>
    <property type="evidence" value="ECO:0007669"/>
    <property type="project" value="UniProtKB-UniRule"/>
</dbReference>
<dbReference type="GO" id="GO:0008137">
    <property type="term" value="F:NADH dehydrogenase (ubiquinone) activity"/>
    <property type="evidence" value="ECO:0007669"/>
    <property type="project" value="InterPro"/>
</dbReference>
<dbReference type="GO" id="GO:0048038">
    <property type="term" value="F:quinone binding"/>
    <property type="evidence" value="ECO:0007669"/>
    <property type="project" value="UniProtKB-KW"/>
</dbReference>
<dbReference type="GO" id="GO:0019684">
    <property type="term" value="P:photosynthesis, light reaction"/>
    <property type="evidence" value="ECO:0007669"/>
    <property type="project" value="UniProtKB-UniRule"/>
</dbReference>
<dbReference type="Gene3D" id="3.30.70.3270">
    <property type="match status" value="1"/>
</dbReference>
<dbReference type="HAMAP" id="MF_01351">
    <property type="entry name" value="NDH1_NuoI"/>
    <property type="match status" value="1"/>
</dbReference>
<dbReference type="InterPro" id="IPR017896">
    <property type="entry name" value="4Fe4S_Fe-S-bd"/>
</dbReference>
<dbReference type="InterPro" id="IPR017900">
    <property type="entry name" value="4Fe4S_Fe_S_CS"/>
</dbReference>
<dbReference type="InterPro" id="IPR010226">
    <property type="entry name" value="NADH_quinone_OxRdtase_chainI"/>
</dbReference>
<dbReference type="InterPro" id="IPR004497">
    <property type="entry name" value="NDHI"/>
</dbReference>
<dbReference type="NCBIfam" id="TIGR00403">
    <property type="entry name" value="ndhI"/>
    <property type="match status" value="1"/>
</dbReference>
<dbReference type="NCBIfam" id="TIGR01971">
    <property type="entry name" value="NuoI"/>
    <property type="match status" value="1"/>
</dbReference>
<dbReference type="NCBIfam" id="NF004537">
    <property type="entry name" value="PRK05888.1-3"/>
    <property type="match status" value="1"/>
</dbReference>
<dbReference type="PANTHER" id="PTHR47275">
    <property type="entry name" value="NAD(P)H-QUINONE OXIDOREDUCTASE SUBUNIT I, CHLOROPLASTIC"/>
    <property type="match status" value="1"/>
</dbReference>
<dbReference type="PANTHER" id="PTHR47275:SF1">
    <property type="entry name" value="NAD(P)H-QUINONE OXIDOREDUCTASE SUBUNIT I, CHLOROPLASTIC"/>
    <property type="match status" value="1"/>
</dbReference>
<dbReference type="Pfam" id="PF12838">
    <property type="entry name" value="Fer4_7"/>
    <property type="match status" value="1"/>
</dbReference>
<dbReference type="SUPFAM" id="SSF54862">
    <property type="entry name" value="4Fe-4S ferredoxins"/>
    <property type="match status" value="1"/>
</dbReference>
<dbReference type="PROSITE" id="PS00198">
    <property type="entry name" value="4FE4S_FER_1"/>
    <property type="match status" value="2"/>
</dbReference>
<dbReference type="PROSITE" id="PS51379">
    <property type="entry name" value="4FE4S_FER_2"/>
    <property type="match status" value="2"/>
</dbReference>